<reference key="1">
    <citation type="journal article" date="2010" name="Nature">
        <title>Genome sequencing and analysis of the model grass Brachypodium distachyon.</title>
        <authorList>
            <consortium name="International Brachypodium Initiative"/>
        </authorList>
    </citation>
    <scope>NUCLEOTIDE SEQUENCE [LARGE SCALE GENOMIC DNA]</scope>
    <source>
        <strain>cv. Bd21</strain>
    </source>
</reference>
<reference key="2">
    <citation type="journal article" date="2014" name="Plant Physiol.">
        <title>Functional and evolutionary analysis of the CASPARIAN STRIP MEMBRANE DOMAIN PROTEIN family.</title>
        <authorList>
            <person name="Roppolo D."/>
            <person name="Boeckmann B."/>
            <person name="Pfister A."/>
            <person name="Boutet E."/>
            <person name="Rubio M.C."/>
            <person name="Denervaud-Tendon V."/>
            <person name="Vermeer J.E."/>
            <person name="Gheyselinck J."/>
            <person name="Xenarios I."/>
            <person name="Geldner N."/>
        </authorList>
    </citation>
    <scope>GENE FAMILY</scope>
    <scope>NOMENCLATURE</scope>
</reference>
<evidence type="ECO:0000250" key="1"/>
<evidence type="ECO:0000255" key="2"/>
<evidence type="ECO:0000305" key="3"/>
<sequence length="184" mass="19753">MEGSGEHGETSKGPLSKGVSRGLCILDLIFRVIAVIGTLASAIAMGTTNQTMPFFTQFVQFKERYSDLPTLTFFVVANSIASAYLIISLPLSIVHIIRSRAKYSRLILIFFDVAMLALVTAAASAGAAIVYLAHNGNVSANWFAICQQFDSFCERISGSLIGSFAAMVVLILLILLSAVALARR</sequence>
<organism>
    <name type="scientific">Brachypodium distachyon</name>
    <name type="common">Purple false brome</name>
    <name type="synonym">Trachynia distachya</name>
    <dbReference type="NCBI Taxonomy" id="15368"/>
    <lineage>
        <taxon>Eukaryota</taxon>
        <taxon>Viridiplantae</taxon>
        <taxon>Streptophyta</taxon>
        <taxon>Embryophyta</taxon>
        <taxon>Tracheophyta</taxon>
        <taxon>Spermatophyta</taxon>
        <taxon>Magnoliopsida</taxon>
        <taxon>Liliopsida</taxon>
        <taxon>Poales</taxon>
        <taxon>Poaceae</taxon>
        <taxon>BOP clade</taxon>
        <taxon>Pooideae</taxon>
        <taxon>Stipodae</taxon>
        <taxon>Brachypodieae</taxon>
        <taxon>Brachypodium</taxon>
    </lineage>
</organism>
<feature type="chain" id="PRO_0000417762" description="Casparian strip membrane protein 3">
    <location>
        <begin position="1"/>
        <end position="184"/>
    </location>
</feature>
<feature type="topological domain" description="Cytoplasmic" evidence="2">
    <location>
        <begin position="1"/>
        <end position="22"/>
    </location>
</feature>
<feature type="transmembrane region" description="Helical" evidence="2">
    <location>
        <begin position="23"/>
        <end position="43"/>
    </location>
</feature>
<feature type="topological domain" description="Extracellular" evidence="2">
    <location>
        <begin position="44"/>
        <end position="72"/>
    </location>
</feature>
<feature type="transmembrane region" description="Helical" evidence="2">
    <location>
        <begin position="73"/>
        <end position="93"/>
    </location>
</feature>
<feature type="topological domain" description="Cytoplasmic" evidence="2">
    <location>
        <begin position="94"/>
        <end position="105"/>
    </location>
</feature>
<feature type="transmembrane region" description="Helical" evidence="2">
    <location>
        <begin position="106"/>
        <end position="126"/>
    </location>
</feature>
<feature type="topological domain" description="Extracellular" evidence="2">
    <location>
        <begin position="127"/>
        <end position="159"/>
    </location>
</feature>
<feature type="transmembrane region" description="Helical" evidence="2">
    <location>
        <begin position="160"/>
        <end position="180"/>
    </location>
</feature>
<feature type="topological domain" description="Cytoplasmic" evidence="2">
    <location>
        <begin position="181"/>
        <end position="184"/>
    </location>
</feature>
<feature type="glycosylation site" description="N-linked (GlcNAc...) asparagine" evidence="2">
    <location>
        <position position="49"/>
    </location>
</feature>
<feature type="glycosylation site" description="N-linked (GlcNAc...) asparagine" evidence="2">
    <location>
        <position position="137"/>
    </location>
</feature>
<name>CASP3_BRADI</name>
<accession>P0DI36</accession>
<accession>A0A0Q3NMW6</accession>
<protein>
    <recommendedName>
        <fullName>Casparian strip membrane protein 3</fullName>
        <shortName>BdCASP3</shortName>
    </recommendedName>
</protein>
<dbReference type="EMBL" id="CM000880">
    <property type="protein sequence ID" value="KQK18846.1"/>
    <property type="molecule type" value="Genomic_DNA"/>
</dbReference>
<dbReference type="RefSeq" id="XP_003564046.1">
    <property type="nucleotide sequence ID" value="XM_003563998.3"/>
</dbReference>
<dbReference type="SMR" id="P0DI36"/>
<dbReference type="FunCoup" id="P0DI36">
    <property type="interactions" value="2108"/>
</dbReference>
<dbReference type="STRING" id="15368.P0DI36"/>
<dbReference type="EnsemblPlants" id="KQK18846">
    <property type="protein sequence ID" value="KQK18846"/>
    <property type="gene ID" value="BRADI_1g45110v3"/>
</dbReference>
<dbReference type="GeneID" id="100833156"/>
<dbReference type="Gramene" id="KQK18846">
    <property type="protein sequence ID" value="KQK18846"/>
    <property type="gene ID" value="BRADI_1g45110v3"/>
</dbReference>
<dbReference type="KEGG" id="bdi:100833156"/>
<dbReference type="eggNOG" id="ENOG502RXTK">
    <property type="taxonomic scope" value="Eukaryota"/>
</dbReference>
<dbReference type="HOGENOM" id="CLU_066104_3_2_1"/>
<dbReference type="InParanoid" id="P0DI36"/>
<dbReference type="OMA" id="HADWFSI"/>
<dbReference type="OrthoDB" id="753675at2759"/>
<dbReference type="Proteomes" id="UP000008810">
    <property type="component" value="Chromosome 1"/>
</dbReference>
<dbReference type="GO" id="GO:0005886">
    <property type="term" value="C:plasma membrane"/>
    <property type="evidence" value="ECO:0000318"/>
    <property type="project" value="GO_Central"/>
</dbReference>
<dbReference type="GO" id="GO:0071555">
    <property type="term" value="P:cell wall organization"/>
    <property type="evidence" value="ECO:0007669"/>
    <property type="project" value="UniProtKB-KW"/>
</dbReference>
<dbReference type="InterPro" id="IPR006459">
    <property type="entry name" value="CASP/CASPL"/>
</dbReference>
<dbReference type="InterPro" id="IPR006702">
    <property type="entry name" value="CASP_dom"/>
</dbReference>
<dbReference type="InterPro" id="IPR044173">
    <property type="entry name" value="CASPL"/>
</dbReference>
<dbReference type="NCBIfam" id="TIGR01569">
    <property type="entry name" value="A_tha_TIGR01569"/>
    <property type="match status" value="1"/>
</dbReference>
<dbReference type="PANTHER" id="PTHR36488:SF12">
    <property type="entry name" value="CASP-LIKE PROTEIN"/>
    <property type="match status" value="1"/>
</dbReference>
<dbReference type="PANTHER" id="PTHR36488">
    <property type="entry name" value="CASP-LIKE PROTEIN 1U1"/>
    <property type="match status" value="1"/>
</dbReference>
<dbReference type="Pfam" id="PF04535">
    <property type="entry name" value="CASP_dom"/>
    <property type="match status" value="1"/>
</dbReference>
<keyword id="KW-1003">Cell membrane</keyword>
<keyword id="KW-0961">Cell wall biogenesis/degradation</keyword>
<keyword id="KW-0325">Glycoprotein</keyword>
<keyword id="KW-0472">Membrane</keyword>
<keyword id="KW-1185">Reference proteome</keyword>
<keyword id="KW-0812">Transmembrane</keyword>
<keyword id="KW-1133">Transmembrane helix</keyword>
<proteinExistence type="inferred from homology"/>
<comment type="function">
    <text evidence="1">Regulates membrane-cell wall junctions and localized cell wall deposition. Required for establishment of the Casparian strip membrane domain (CSD) and the subsequent formation of Casparian strips, a cell wall modification of the root endodermis that determines an apoplastic barrier between the intraorganismal apoplasm and the extraorganismal apoplasm and prevents lateral diffusion (By similarity).</text>
</comment>
<comment type="subunit">
    <text evidence="1">Homodimer and heterodimers.</text>
</comment>
<comment type="subcellular location">
    <subcellularLocation>
        <location evidence="1">Cell membrane</location>
        <topology evidence="1">Multi-pass membrane protein</topology>
    </subcellularLocation>
    <text evidence="1">Very restricted localization following a belt shape within the plasma membrane which coincides with the position of the Casparian strip membrane domain in the root endodermis.</text>
</comment>
<comment type="similarity">
    <text evidence="3">Belongs to the Casparian strip membrane proteins (CASP) family.</text>
</comment>
<gene>
    <name type="ordered locus">Bradi1g45110</name>
    <name type="ORF">LOC100833156</name>
</gene>